<organism>
    <name type="scientific">Methanocaldococcus jannaschii (strain ATCC 43067 / DSM 2661 / JAL-1 / JCM 10045 / NBRC 100440)</name>
    <name type="common">Methanococcus jannaschii</name>
    <dbReference type="NCBI Taxonomy" id="243232"/>
    <lineage>
        <taxon>Archaea</taxon>
        <taxon>Methanobacteriati</taxon>
        <taxon>Methanobacteriota</taxon>
        <taxon>Methanomada group</taxon>
        <taxon>Methanococci</taxon>
        <taxon>Methanococcales</taxon>
        <taxon>Methanocaldococcaceae</taxon>
        <taxon>Methanocaldococcus</taxon>
    </lineage>
</organism>
<keyword id="KW-1185">Reference proteome</keyword>
<reference key="1">
    <citation type="journal article" date="1996" name="Science">
        <title>Complete genome sequence of the methanogenic archaeon, Methanococcus jannaschii.</title>
        <authorList>
            <person name="Bult C.J."/>
            <person name="White O."/>
            <person name="Olsen G.J."/>
            <person name="Zhou L."/>
            <person name="Fleischmann R.D."/>
            <person name="Sutton G.G."/>
            <person name="Blake J.A."/>
            <person name="FitzGerald L.M."/>
            <person name="Clayton R.A."/>
            <person name="Gocayne J.D."/>
            <person name="Kerlavage A.R."/>
            <person name="Dougherty B.A."/>
            <person name="Tomb J.-F."/>
            <person name="Adams M.D."/>
            <person name="Reich C.I."/>
            <person name="Overbeek R."/>
            <person name="Kirkness E.F."/>
            <person name="Weinstock K.G."/>
            <person name="Merrick J.M."/>
            <person name="Glodek A."/>
            <person name="Scott J.L."/>
            <person name="Geoghagen N.S.M."/>
            <person name="Weidman J.F."/>
            <person name="Fuhrmann J.L."/>
            <person name="Nguyen D."/>
            <person name="Utterback T.R."/>
            <person name="Kelley J.M."/>
            <person name="Peterson J.D."/>
            <person name="Sadow P.W."/>
            <person name="Hanna M.C."/>
            <person name="Cotton M.D."/>
            <person name="Roberts K.M."/>
            <person name="Hurst M.A."/>
            <person name="Kaine B.P."/>
            <person name="Borodovsky M."/>
            <person name="Klenk H.-P."/>
            <person name="Fraser C.M."/>
            <person name="Smith H.O."/>
            <person name="Woese C.R."/>
            <person name="Venter J.C."/>
        </authorList>
    </citation>
    <scope>NUCLEOTIDE SEQUENCE [LARGE SCALE GENOMIC DNA]</scope>
    <source>
        <strain>ATCC 43067 / DSM 2661 / JAL-1 / JCM 10045 / NBRC 100440</strain>
    </source>
</reference>
<dbReference type="EMBL" id="L77117">
    <property type="protein sequence ID" value="AAB98304.1"/>
    <property type="molecule type" value="Genomic_DNA"/>
</dbReference>
<dbReference type="PIR" id="H64339">
    <property type="entry name" value="H64339"/>
</dbReference>
<dbReference type="RefSeq" id="WP_010869817.1">
    <property type="nucleotide sequence ID" value="NC_000909.1"/>
</dbReference>
<dbReference type="SMR" id="Q57767"/>
<dbReference type="STRING" id="243232.MJ_0319"/>
<dbReference type="PaxDb" id="243232-MJ_0319"/>
<dbReference type="EnsemblBacteria" id="AAB98304">
    <property type="protein sequence ID" value="AAB98304"/>
    <property type="gene ID" value="MJ_0319"/>
</dbReference>
<dbReference type="GeneID" id="1451174"/>
<dbReference type="KEGG" id="mja:MJ_0319"/>
<dbReference type="eggNOG" id="arCOG04140">
    <property type="taxonomic scope" value="Archaea"/>
</dbReference>
<dbReference type="HOGENOM" id="CLU_179754_1_0_2"/>
<dbReference type="InParanoid" id="Q57767"/>
<dbReference type="OrthoDB" id="201945at2157"/>
<dbReference type="PhylomeDB" id="Q57767"/>
<dbReference type="Proteomes" id="UP000000805">
    <property type="component" value="Chromosome"/>
</dbReference>
<dbReference type="Gene3D" id="3.30.70.1340">
    <property type="entry name" value="MTH889-like domain"/>
    <property type="match status" value="1"/>
</dbReference>
<dbReference type="InterPro" id="IPR003831">
    <property type="entry name" value="DUF211"/>
</dbReference>
<dbReference type="InterPro" id="IPR023129">
    <property type="entry name" value="MTH889-like_dom_sf"/>
</dbReference>
<dbReference type="PANTHER" id="PTHR42240">
    <property type="entry name" value="DUF211 DOMAIN-CONTAINING PROTEIN"/>
    <property type="match status" value="1"/>
</dbReference>
<dbReference type="PANTHER" id="PTHR42240:SF1">
    <property type="entry name" value="DUF211 DOMAIN-CONTAINING PROTEIN"/>
    <property type="match status" value="1"/>
</dbReference>
<dbReference type="Pfam" id="PF02680">
    <property type="entry name" value="DUF211"/>
    <property type="match status" value="1"/>
</dbReference>
<dbReference type="SUPFAM" id="SSF160363">
    <property type="entry name" value="MTH889-like"/>
    <property type="match status" value="1"/>
</dbReference>
<accession>Q57767</accession>
<feature type="chain" id="PRO_0000106791" description="Uncharacterized protein MJ0319">
    <location>
        <begin position="1"/>
        <end position="97"/>
    </location>
</feature>
<proteinExistence type="predicted"/>
<protein>
    <recommendedName>
        <fullName>Uncharacterized protein MJ0319</fullName>
    </recommendedName>
</protein>
<name>Y319_METJA</name>
<sequence length="97" mass="10920">MNGIRRIVLDILKPHEPKITDMALKLTSLSNIDGVNITVYEIDKETENVKVTIEGNNLDFDEIQEIIESLGGTIHSIDEVVAGKKIIEEVRTPQDRH</sequence>
<gene>
    <name type="ordered locus">MJ0319</name>
</gene>